<protein>
    <recommendedName>
        <fullName>DnaJ protein homolog 1</fullName>
        <shortName>DROJ1</shortName>
    </recommendedName>
</protein>
<feature type="chain" id="PRO_0000071006" description="DnaJ protein homolog 1">
    <location>
        <begin position="1"/>
        <end position="334"/>
    </location>
</feature>
<feature type="domain" description="J" evidence="1">
    <location>
        <begin position="4"/>
        <end position="68"/>
    </location>
</feature>
<feature type="modified residue" description="Phosphoserine" evidence="2">
    <location>
        <position position="187"/>
    </location>
</feature>
<feature type="sequence conflict" description="In Ref. 1; AAC23584." evidence="3" ref="1">
    <original>G</original>
    <variation>E</variation>
    <location>
        <position position="261"/>
    </location>
</feature>
<proteinExistence type="evidence at protein level"/>
<gene>
    <name type="primary">DnaJ-1</name>
    <name type="synonym">DROJ1</name>
    <name type="ORF">CG10578</name>
</gene>
<reference key="1">
    <citation type="submission" date="1998-06" db="EMBL/GenBank/DDBJ databases">
        <authorList>
            <person name="Lee J.Y."/>
            <person name="Palter K.B."/>
        </authorList>
    </citation>
    <scope>NUCLEOTIDE SEQUENCE [MRNA]</scope>
</reference>
<reference key="2">
    <citation type="journal article" date="2000" name="Science">
        <title>The genome sequence of Drosophila melanogaster.</title>
        <authorList>
            <person name="Adams M.D."/>
            <person name="Celniker S.E."/>
            <person name="Holt R.A."/>
            <person name="Evans C.A."/>
            <person name="Gocayne J.D."/>
            <person name="Amanatides P.G."/>
            <person name="Scherer S.E."/>
            <person name="Li P.W."/>
            <person name="Hoskins R.A."/>
            <person name="Galle R.F."/>
            <person name="George R.A."/>
            <person name="Lewis S.E."/>
            <person name="Richards S."/>
            <person name="Ashburner M."/>
            <person name="Henderson S.N."/>
            <person name="Sutton G.G."/>
            <person name="Wortman J.R."/>
            <person name="Yandell M.D."/>
            <person name="Zhang Q."/>
            <person name="Chen L.X."/>
            <person name="Brandon R.C."/>
            <person name="Rogers Y.-H.C."/>
            <person name="Blazej R.G."/>
            <person name="Champe M."/>
            <person name="Pfeiffer B.D."/>
            <person name="Wan K.H."/>
            <person name="Doyle C."/>
            <person name="Baxter E.G."/>
            <person name="Helt G."/>
            <person name="Nelson C.R."/>
            <person name="Miklos G.L.G."/>
            <person name="Abril J.F."/>
            <person name="Agbayani A."/>
            <person name="An H.-J."/>
            <person name="Andrews-Pfannkoch C."/>
            <person name="Baldwin D."/>
            <person name="Ballew R.M."/>
            <person name="Basu A."/>
            <person name="Baxendale J."/>
            <person name="Bayraktaroglu L."/>
            <person name="Beasley E.M."/>
            <person name="Beeson K.Y."/>
            <person name="Benos P.V."/>
            <person name="Berman B.P."/>
            <person name="Bhandari D."/>
            <person name="Bolshakov S."/>
            <person name="Borkova D."/>
            <person name="Botchan M.R."/>
            <person name="Bouck J."/>
            <person name="Brokstein P."/>
            <person name="Brottier P."/>
            <person name="Burtis K.C."/>
            <person name="Busam D.A."/>
            <person name="Butler H."/>
            <person name="Cadieu E."/>
            <person name="Center A."/>
            <person name="Chandra I."/>
            <person name="Cherry J.M."/>
            <person name="Cawley S."/>
            <person name="Dahlke C."/>
            <person name="Davenport L.B."/>
            <person name="Davies P."/>
            <person name="de Pablos B."/>
            <person name="Delcher A."/>
            <person name="Deng Z."/>
            <person name="Mays A.D."/>
            <person name="Dew I."/>
            <person name="Dietz S.M."/>
            <person name="Dodson K."/>
            <person name="Doup L.E."/>
            <person name="Downes M."/>
            <person name="Dugan-Rocha S."/>
            <person name="Dunkov B.C."/>
            <person name="Dunn P."/>
            <person name="Durbin K.J."/>
            <person name="Evangelista C.C."/>
            <person name="Ferraz C."/>
            <person name="Ferriera S."/>
            <person name="Fleischmann W."/>
            <person name="Fosler C."/>
            <person name="Gabrielian A.E."/>
            <person name="Garg N.S."/>
            <person name="Gelbart W.M."/>
            <person name="Glasser K."/>
            <person name="Glodek A."/>
            <person name="Gong F."/>
            <person name="Gorrell J.H."/>
            <person name="Gu Z."/>
            <person name="Guan P."/>
            <person name="Harris M."/>
            <person name="Harris N.L."/>
            <person name="Harvey D.A."/>
            <person name="Heiman T.J."/>
            <person name="Hernandez J.R."/>
            <person name="Houck J."/>
            <person name="Hostin D."/>
            <person name="Houston K.A."/>
            <person name="Howland T.J."/>
            <person name="Wei M.-H."/>
            <person name="Ibegwam C."/>
            <person name="Jalali M."/>
            <person name="Kalush F."/>
            <person name="Karpen G.H."/>
            <person name="Ke Z."/>
            <person name="Kennison J.A."/>
            <person name="Ketchum K.A."/>
            <person name="Kimmel B.E."/>
            <person name="Kodira C.D."/>
            <person name="Kraft C.L."/>
            <person name="Kravitz S."/>
            <person name="Kulp D."/>
            <person name="Lai Z."/>
            <person name="Lasko P."/>
            <person name="Lei Y."/>
            <person name="Levitsky A.A."/>
            <person name="Li J.H."/>
            <person name="Li Z."/>
            <person name="Liang Y."/>
            <person name="Lin X."/>
            <person name="Liu X."/>
            <person name="Mattei B."/>
            <person name="McIntosh T.C."/>
            <person name="McLeod M.P."/>
            <person name="McPherson D."/>
            <person name="Merkulov G."/>
            <person name="Milshina N.V."/>
            <person name="Mobarry C."/>
            <person name="Morris J."/>
            <person name="Moshrefi A."/>
            <person name="Mount S.M."/>
            <person name="Moy M."/>
            <person name="Murphy B."/>
            <person name="Murphy L."/>
            <person name="Muzny D.M."/>
            <person name="Nelson D.L."/>
            <person name="Nelson D.R."/>
            <person name="Nelson K.A."/>
            <person name="Nixon K."/>
            <person name="Nusskern D.R."/>
            <person name="Pacleb J.M."/>
            <person name="Palazzolo M."/>
            <person name="Pittman G.S."/>
            <person name="Pan S."/>
            <person name="Pollard J."/>
            <person name="Puri V."/>
            <person name="Reese M.G."/>
            <person name="Reinert K."/>
            <person name="Remington K."/>
            <person name="Saunders R.D.C."/>
            <person name="Scheeler F."/>
            <person name="Shen H."/>
            <person name="Shue B.C."/>
            <person name="Siden-Kiamos I."/>
            <person name="Simpson M."/>
            <person name="Skupski M.P."/>
            <person name="Smith T.J."/>
            <person name="Spier E."/>
            <person name="Spradling A.C."/>
            <person name="Stapleton M."/>
            <person name="Strong R."/>
            <person name="Sun E."/>
            <person name="Svirskas R."/>
            <person name="Tector C."/>
            <person name="Turner R."/>
            <person name="Venter E."/>
            <person name="Wang A.H."/>
            <person name="Wang X."/>
            <person name="Wang Z.-Y."/>
            <person name="Wassarman D.A."/>
            <person name="Weinstock G.M."/>
            <person name="Weissenbach J."/>
            <person name="Williams S.M."/>
            <person name="Woodage T."/>
            <person name="Worley K.C."/>
            <person name="Wu D."/>
            <person name="Yang S."/>
            <person name="Yao Q.A."/>
            <person name="Ye J."/>
            <person name="Yeh R.-F."/>
            <person name="Zaveri J.S."/>
            <person name="Zhan M."/>
            <person name="Zhang G."/>
            <person name="Zhao Q."/>
            <person name="Zheng L."/>
            <person name="Zheng X.H."/>
            <person name="Zhong F.N."/>
            <person name="Zhong W."/>
            <person name="Zhou X."/>
            <person name="Zhu S.C."/>
            <person name="Zhu X."/>
            <person name="Smith H.O."/>
            <person name="Gibbs R.A."/>
            <person name="Myers E.W."/>
            <person name="Rubin G.M."/>
            <person name="Venter J.C."/>
        </authorList>
    </citation>
    <scope>NUCLEOTIDE SEQUENCE [LARGE SCALE GENOMIC DNA]</scope>
    <source>
        <strain>Berkeley</strain>
    </source>
</reference>
<reference key="3">
    <citation type="journal article" date="2002" name="Genome Biol.">
        <title>Annotation of the Drosophila melanogaster euchromatic genome: a systematic review.</title>
        <authorList>
            <person name="Misra S."/>
            <person name="Crosby M.A."/>
            <person name="Mungall C.J."/>
            <person name="Matthews B.B."/>
            <person name="Campbell K.S."/>
            <person name="Hradecky P."/>
            <person name="Huang Y."/>
            <person name="Kaminker J.S."/>
            <person name="Millburn G.H."/>
            <person name="Prochnik S.E."/>
            <person name="Smith C.D."/>
            <person name="Tupy J.L."/>
            <person name="Whitfield E.J."/>
            <person name="Bayraktaroglu L."/>
            <person name="Berman B.P."/>
            <person name="Bettencourt B.R."/>
            <person name="Celniker S.E."/>
            <person name="de Grey A.D.N.J."/>
            <person name="Drysdale R.A."/>
            <person name="Harris N.L."/>
            <person name="Richter J."/>
            <person name="Russo S."/>
            <person name="Schroeder A.J."/>
            <person name="Shu S.Q."/>
            <person name="Stapleton M."/>
            <person name="Yamada C."/>
            <person name="Ashburner M."/>
            <person name="Gelbart W.M."/>
            <person name="Rubin G.M."/>
            <person name="Lewis S.E."/>
        </authorList>
    </citation>
    <scope>GENOME REANNOTATION</scope>
    <source>
        <strain>Berkeley</strain>
    </source>
</reference>
<reference key="4">
    <citation type="journal article" date="2002" name="Genome Biol.">
        <title>A Drosophila full-length cDNA resource.</title>
        <authorList>
            <person name="Stapleton M."/>
            <person name="Carlson J.W."/>
            <person name="Brokstein P."/>
            <person name="Yu C."/>
            <person name="Champe M."/>
            <person name="George R.A."/>
            <person name="Guarin H."/>
            <person name="Kronmiller B."/>
            <person name="Pacleb J.M."/>
            <person name="Park S."/>
            <person name="Wan K.H."/>
            <person name="Rubin G.M."/>
            <person name="Celniker S.E."/>
        </authorList>
    </citation>
    <scope>NUCLEOTIDE SEQUENCE [LARGE SCALE MRNA]</scope>
    <source>
        <strain>Berkeley</strain>
        <tissue>Embryo</tissue>
    </source>
</reference>
<reference key="5">
    <citation type="journal article" date="2008" name="J. Proteome Res.">
        <title>Phosphoproteome analysis of Drosophila melanogaster embryos.</title>
        <authorList>
            <person name="Zhai B."/>
            <person name="Villen J."/>
            <person name="Beausoleil S.A."/>
            <person name="Mintseris J."/>
            <person name="Gygi S.P."/>
        </authorList>
    </citation>
    <scope>PHOSPHORYLATION [LARGE SCALE ANALYSIS] AT SER-187</scope>
    <scope>IDENTIFICATION BY MASS SPECTROMETRY</scope>
    <source>
        <tissue>Embryo</tissue>
    </source>
</reference>
<sequence>MGKDFYKILGLERKASDDEIKKAYRKLALKYHPDKNKSPQAEERFKEIAEAYEVLSDKKKRDIFDNYGEDGLKGGQPGPDGGGQPGAYTYQFHGDPRATFAQFFGSSDPFGAFFTGGDNMFSGGQGGNTNEIFWNIGGDDMFAFNAQAPSRKRQQDPPIEHDLFVSLEEVDKGCIKKMKISRMATGSNGPYKEEKVLRITVKPGWKAGTKITFPQEGDSAPNKTPADIVFIIRDKPHSLFKREGIDLKYTAQISLKQALCGALVSVPTLQGSRIQVNPNHEIIKPTTTRRINGLGLPVPKEPSRRGDLIVSFDIKFPDTLAPSLQNQLSELLPN</sequence>
<dbReference type="EMBL" id="U34904">
    <property type="protein sequence ID" value="AAC23584.1"/>
    <property type="molecule type" value="mRNA"/>
</dbReference>
<dbReference type="EMBL" id="AE014296">
    <property type="protein sequence ID" value="AAF50753.1"/>
    <property type="molecule type" value="Genomic_DNA"/>
</dbReference>
<dbReference type="EMBL" id="AY058788">
    <property type="protein sequence ID" value="AAL14017.1"/>
    <property type="molecule type" value="mRNA"/>
</dbReference>
<dbReference type="RefSeq" id="NP_523936.2">
    <property type="nucleotide sequence ID" value="NM_079212.4"/>
</dbReference>
<dbReference type="RefSeq" id="NP_729086.1">
    <property type="nucleotide sequence ID" value="NM_168128.3"/>
</dbReference>
<dbReference type="SMR" id="Q24133"/>
<dbReference type="BioGRID" id="64104">
    <property type="interactions" value="47"/>
</dbReference>
<dbReference type="DIP" id="DIP-18469N"/>
<dbReference type="FunCoup" id="Q24133">
    <property type="interactions" value="1059"/>
</dbReference>
<dbReference type="IntAct" id="Q24133">
    <property type="interactions" value="15"/>
</dbReference>
<dbReference type="STRING" id="7227.FBpp0076830"/>
<dbReference type="iPTMnet" id="Q24133"/>
<dbReference type="PaxDb" id="7227-FBpp0076829"/>
<dbReference type="DNASU" id="38643"/>
<dbReference type="EnsemblMetazoa" id="FBtr0077123">
    <property type="protein sequence ID" value="FBpp0076829"/>
    <property type="gene ID" value="FBgn0263106"/>
</dbReference>
<dbReference type="EnsemblMetazoa" id="FBtr0077124">
    <property type="protein sequence ID" value="FBpp0076830"/>
    <property type="gene ID" value="FBgn0263106"/>
</dbReference>
<dbReference type="GeneID" id="38643"/>
<dbReference type="KEGG" id="dme:Dmel_CG10578"/>
<dbReference type="AGR" id="FB:FBgn0263106"/>
<dbReference type="CTD" id="38643"/>
<dbReference type="FlyBase" id="FBgn0263106">
    <property type="gene designation" value="DnaJ-1"/>
</dbReference>
<dbReference type="VEuPathDB" id="VectorBase:FBgn0263106"/>
<dbReference type="eggNOG" id="KOG0714">
    <property type="taxonomic scope" value="Eukaryota"/>
</dbReference>
<dbReference type="HOGENOM" id="CLU_017633_0_0_1"/>
<dbReference type="InParanoid" id="Q24133"/>
<dbReference type="OMA" id="MPIRKEG"/>
<dbReference type="OrthoDB" id="550424at2759"/>
<dbReference type="PhylomeDB" id="Q24133"/>
<dbReference type="BioGRID-ORCS" id="38643">
    <property type="hits" value="0 hits in 3 CRISPR screens"/>
</dbReference>
<dbReference type="GenomeRNAi" id="38643"/>
<dbReference type="PRO" id="PR:Q24133"/>
<dbReference type="Proteomes" id="UP000000803">
    <property type="component" value="Chromosome 3L"/>
</dbReference>
<dbReference type="Bgee" id="FBgn0263106">
    <property type="expression patterns" value="Expressed in fat body cell in digestive tract and 300 other cell types or tissues"/>
</dbReference>
<dbReference type="ExpressionAtlas" id="Q24133">
    <property type="expression patterns" value="baseline and differential"/>
</dbReference>
<dbReference type="GO" id="GO:0005829">
    <property type="term" value="C:cytosol"/>
    <property type="evidence" value="ECO:0000318"/>
    <property type="project" value="GO_Central"/>
</dbReference>
<dbReference type="GO" id="GO:0140297">
    <property type="term" value="F:DNA-binding transcription factor binding"/>
    <property type="evidence" value="ECO:0000353"/>
    <property type="project" value="FlyBase"/>
</dbReference>
<dbReference type="GO" id="GO:0051087">
    <property type="term" value="F:protein-folding chaperone binding"/>
    <property type="evidence" value="ECO:0000318"/>
    <property type="project" value="GO_Central"/>
</dbReference>
<dbReference type="GO" id="GO:0051082">
    <property type="term" value="F:unfolded protein binding"/>
    <property type="evidence" value="ECO:0000318"/>
    <property type="project" value="GO_Central"/>
</dbReference>
<dbReference type="GO" id="GO:0051085">
    <property type="term" value="P:chaperone cofactor-dependent protein refolding"/>
    <property type="evidence" value="ECO:0000318"/>
    <property type="project" value="GO_Central"/>
</dbReference>
<dbReference type="GO" id="GO:0042691">
    <property type="term" value="P:positive regulation of crystal cell differentiation"/>
    <property type="evidence" value="ECO:0000316"/>
    <property type="project" value="FlyBase"/>
</dbReference>
<dbReference type="GO" id="GO:0006457">
    <property type="term" value="P:protein folding"/>
    <property type="evidence" value="ECO:0000250"/>
    <property type="project" value="FlyBase"/>
</dbReference>
<dbReference type="GO" id="GO:0050821">
    <property type="term" value="P:protein stabilization"/>
    <property type="evidence" value="ECO:0000315"/>
    <property type="project" value="FlyBase"/>
</dbReference>
<dbReference type="GO" id="GO:0009408">
    <property type="term" value="P:response to heat"/>
    <property type="evidence" value="ECO:0000270"/>
    <property type="project" value="FlyBase"/>
</dbReference>
<dbReference type="CDD" id="cd06257">
    <property type="entry name" value="DnaJ"/>
    <property type="match status" value="1"/>
</dbReference>
<dbReference type="CDD" id="cd10747">
    <property type="entry name" value="DnaJ_C"/>
    <property type="match status" value="1"/>
</dbReference>
<dbReference type="FunFam" id="2.60.260.20:FF:000002">
    <property type="entry name" value="Dnaj homolog subfamily b member"/>
    <property type="match status" value="1"/>
</dbReference>
<dbReference type="FunFam" id="1.10.287.110:FF:000033">
    <property type="entry name" value="dnaJ homolog subfamily B member 13"/>
    <property type="match status" value="1"/>
</dbReference>
<dbReference type="FunFam" id="2.60.260.20:FF:000026">
    <property type="entry name" value="Uncharacterized protein, isoform B"/>
    <property type="match status" value="1"/>
</dbReference>
<dbReference type="Gene3D" id="1.10.287.110">
    <property type="entry name" value="DnaJ domain"/>
    <property type="match status" value="1"/>
</dbReference>
<dbReference type="Gene3D" id="2.60.260.20">
    <property type="entry name" value="Urease metallochaperone UreE, N-terminal domain"/>
    <property type="match status" value="2"/>
</dbReference>
<dbReference type="InterPro" id="IPR002939">
    <property type="entry name" value="DnaJ_C"/>
</dbReference>
<dbReference type="InterPro" id="IPR001623">
    <property type="entry name" value="DnaJ_domain"/>
</dbReference>
<dbReference type="InterPro" id="IPR018253">
    <property type="entry name" value="DnaJ_domain_CS"/>
</dbReference>
<dbReference type="InterPro" id="IPR051339">
    <property type="entry name" value="DnaJ_subfamily_B"/>
</dbReference>
<dbReference type="InterPro" id="IPR008971">
    <property type="entry name" value="HSP40/DnaJ_pept-bd"/>
</dbReference>
<dbReference type="InterPro" id="IPR036869">
    <property type="entry name" value="J_dom_sf"/>
</dbReference>
<dbReference type="PANTHER" id="PTHR24078:SF576">
    <property type="entry name" value="AT19485P-RELATED"/>
    <property type="match status" value="1"/>
</dbReference>
<dbReference type="PANTHER" id="PTHR24078">
    <property type="entry name" value="DNAJ HOMOLOG SUBFAMILY C MEMBER"/>
    <property type="match status" value="1"/>
</dbReference>
<dbReference type="Pfam" id="PF00226">
    <property type="entry name" value="DnaJ"/>
    <property type="match status" value="1"/>
</dbReference>
<dbReference type="Pfam" id="PF01556">
    <property type="entry name" value="DnaJ_C"/>
    <property type="match status" value="1"/>
</dbReference>
<dbReference type="PRINTS" id="PR00625">
    <property type="entry name" value="JDOMAIN"/>
</dbReference>
<dbReference type="SMART" id="SM00271">
    <property type="entry name" value="DnaJ"/>
    <property type="match status" value="1"/>
</dbReference>
<dbReference type="SUPFAM" id="SSF46565">
    <property type="entry name" value="Chaperone J-domain"/>
    <property type="match status" value="1"/>
</dbReference>
<dbReference type="SUPFAM" id="SSF49493">
    <property type="entry name" value="HSP40/DnaJ peptide-binding domain"/>
    <property type="match status" value="2"/>
</dbReference>
<dbReference type="PROSITE" id="PS00636">
    <property type="entry name" value="DNAJ_1"/>
    <property type="match status" value="1"/>
</dbReference>
<dbReference type="PROSITE" id="PS50076">
    <property type="entry name" value="DNAJ_2"/>
    <property type="match status" value="1"/>
</dbReference>
<comment type="subcellular location">
    <subcellularLocation>
        <location>Cytoplasm</location>
    </subcellularLocation>
</comment>
<comment type="induction">
    <text>By heat shock.</text>
</comment>
<evidence type="ECO:0000255" key="1">
    <source>
        <dbReference type="PROSITE-ProRule" id="PRU00286"/>
    </source>
</evidence>
<evidence type="ECO:0000269" key="2">
    <source>
    </source>
</evidence>
<evidence type="ECO:0000305" key="3"/>
<keyword id="KW-0143">Chaperone</keyword>
<keyword id="KW-0963">Cytoplasm</keyword>
<keyword id="KW-0597">Phosphoprotein</keyword>
<keyword id="KW-1185">Reference proteome</keyword>
<keyword id="KW-0346">Stress response</keyword>
<name>DNAJ1_DROME</name>
<organism>
    <name type="scientific">Drosophila melanogaster</name>
    <name type="common">Fruit fly</name>
    <dbReference type="NCBI Taxonomy" id="7227"/>
    <lineage>
        <taxon>Eukaryota</taxon>
        <taxon>Metazoa</taxon>
        <taxon>Ecdysozoa</taxon>
        <taxon>Arthropoda</taxon>
        <taxon>Hexapoda</taxon>
        <taxon>Insecta</taxon>
        <taxon>Pterygota</taxon>
        <taxon>Neoptera</taxon>
        <taxon>Endopterygota</taxon>
        <taxon>Diptera</taxon>
        <taxon>Brachycera</taxon>
        <taxon>Muscomorpha</taxon>
        <taxon>Ephydroidea</taxon>
        <taxon>Drosophilidae</taxon>
        <taxon>Drosophila</taxon>
        <taxon>Sophophora</taxon>
    </lineage>
</organism>
<accession>Q24133</accession>
<accession>Q9VRP0</accession>